<evidence type="ECO:0000250" key="1"/>
<evidence type="ECO:0000269" key="2">
    <source ref="1"/>
</evidence>
<evidence type="ECO:0000305" key="3"/>
<organismHost>
    <name type="scientific">Nephotettix cincticeps</name>
    <name type="common">Green rice leafhopper</name>
    <name type="synonym">Selenocephalus cincticeps</name>
    <dbReference type="NCBI Taxonomy" id="94400"/>
</organismHost>
<organismHost>
    <name type="scientific">Oryza sativa</name>
    <name type="common">Rice</name>
    <dbReference type="NCBI Taxonomy" id="4530"/>
</organismHost>
<reference key="1">
    <citation type="journal article" date="2002" name="Jpn. Agric. Res. Q.">
        <title>Sequence analysis and GTP-binding ability of the minor core protein P5 of Rice gall dwarf virus.</title>
        <authorList>
            <person name="Ichimi K."/>
            <person name="Kikuchi A."/>
            <person name="Moriyasu Y."/>
            <person name="Zhong X.B."/>
            <person name="Hagiwara K."/>
            <person name="Kamiunten H."/>
            <person name="Omura T."/>
        </authorList>
    </citation>
    <scope>NUCLEOTIDE SEQUENCE [GENOMIC RNA]</scope>
    <scope>FUNCTION</scope>
</reference>
<accession>Q1WNZ7</accession>
<keyword id="KW-0342">GTP-binding</keyword>
<keyword id="KW-1035">Host cytoplasm</keyword>
<keyword id="KW-0506">mRNA capping</keyword>
<keyword id="KW-0507">mRNA processing</keyword>
<keyword id="KW-0547">Nucleotide-binding</keyword>
<keyword id="KW-0548">Nucleotidyltransferase</keyword>
<keyword id="KW-1185">Reference proteome</keyword>
<keyword id="KW-0694">RNA-binding</keyword>
<keyword id="KW-0808">Transferase</keyword>
<keyword id="KW-0946">Virion</keyword>
<feature type="chain" id="PRO_0000402404" description="Putative mRNA-capping enzyme P5">
    <location>
        <begin position="1"/>
        <end position="799"/>
    </location>
</feature>
<organism>
    <name type="scientific">Rice gall dwarf virus</name>
    <name type="common">RGDV</name>
    <dbReference type="NCBI Taxonomy" id="10986"/>
    <lineage>
        <taxon>Viruses</taxon>
        <taxon>Riboviria</taxon>
        <taxon>Orthornavirae</taxon>
        <taxon>Duplornaviricota</taxon>
        <taxon>Resentoviricetes</taxon>
        <taxon>Reovirales</taxon>
        <taxon>Sedoreoviridae</taxon>
        <taxon>Phytoreovirus</taxon>
    </lineage>
</organism>
<protein>
    <recommendedName>
        <fullName>Putative mRNA-capping enzyme P5</fullName>
    </recommendedName>
    <alternativeName>
        <fullName>Structural protein 5</fullName>
    </alternativeName>
    <alternativeName>
        <fullName>mRNA guanylyltransferase P5</fullName>
        <ecNumber>2.7.7.50</ecNumber>
    </alternativeName>
</protein>
<name>MCE_RGDV</name>
<dbReference type="EC" id="2.7.7.50"/>
<dbReference type="EMBL" id="D76429">
    <property type="protein sequence ID" value="BAE92557.1"/>
    <property type="molecule type" value="Genomic_RNA"/>
</dbReference>
<dbReference type="RefSeq" id="YP_001111372.1">
    <property type="nucleotide sequence ID" value="NC_009247.1"/>
</dbReference>
<dbReference type="SMR" id="Q1WNZ7"/>
<dbReference type="GeneID" id="5075723"/>
<dbReference type="KEGG" id="vg:5075723"/>
<dbReference type="OrthoDB" id="2819at10239"/>
<dbReference type="UniPathway" id="UPA00922"/>
<dbReference type="Proteomes" id="UP000006720">
    <property type="component" value="Genome"/>
</dbReference>
<dbReference type="GO" id="GO:0030430">
    <property type="term" value="C:host cell cytoplasm"/>
    <property type="evidence" value="ECO:0007669"/>
    <property type="project" value="UniProtKB-SubCell"/>
</dbReference>
<dbReference type="GO" id="GO:0044423">
    <property type="term" value="C:virion component"/>
    <property type="evidence" value="ECO:0007669"/>
    <property type="project" value="UniProtKB-KW"/>
</dbReference>
<dbReference type="GO" id="GO:0005525">
    <property type="term" value="F:GTP binding"/>
    <property type="evidence" value="ECO:0007669"/>
    <property type="project" value="UniProtKB-KW"/>
</dbReference>
<dbReference type="GO" id="GO:0004484">
    <property type="term" value="F:mRNA guanylyltransferase activity"/>
    <property type="evidence" value="ECO:0007669"/>
    <property type="project" value="UniProtKB-EC"/>
</dbReference>
<dbReference type="GO" id="GO:0003723">
    <property type="term" value="F:RNA binding"/>
    <property type="evidence" value="ECO:0007669"/>
    <property type="project" value="UniProtKB-KW"/>
</dbReference>
<dbReference type="GO" id="GO:0006370">
    <property type="term" value="P:7-methylguanosine mRNA capping"/>
    <property type="evidence" value="ECO:0007669"/>
    <property type="project" value="UniProtKB-UniPathway"/>
</dbReference>
<dbReference type="CDD" id="cd20759">
    <property type="entry name" value="capping_2-OMTase_Phytoreovirus"/>
    <property type="match status" value="1"/>
</dbReference>
<dbReference type="InterPro" id="IPR044310">
    <property type="entry name" value="P5_Phytoreov"/>
</dbReference>
<proteinExistence type="inferred from homology"/>
<sequence length="799" mass="90875">MQAKTTSEEYVIPNFAQTINNRTIVNIFESCKYRSPLIICALNDAVLAKEYSNSMAMGSGTITFMIDNDVDIMSSLYTTFRTVSTLLLMGNQLCVFIVVPMSVISTDALTAIAYAYRGAMIELRHYGRGDDYVQERLESLFKLSPLCGTPHMGPKYYGPTVFSELLDLSHHNKTSWYSVIDYSMFTRTALVGFASYMMKTLSLNSSIVNIVGYNPPYVWAAMMHGVTIRYIEKEIPNPKGKGPMGLIMPELNGRVLTNKVKYVLHNPQIKLLCLDSMMFMSSRNIVYIGAYPATHLLDMNLRGWNIYAVDPEITQQWISDMKAKTGANICASSRKFMFDVSENIKINEFFGNQPYSIIDDSWVPDNYEQFQDKKRNYFQELVKSDQKVTLITMKWNTRKNVTCEKLLALLPQPYGGKLYEMRAFFHRNGIGSITIDANSVEKYIQKFQELPLGAQVGTQKFMHTMISRVQDVMSIQPKKGDVIIASYSLSNASNPKKKVLEYLTKASKSEAMIIFGAPNLERVKYMRERGVLPGNNITINGEKITFNNPSGKKWTDFGYTNSELLACDMIEVTIEQMVSFMSTSFRGTGYYSNSIYNDLFSWFIPIWVWNQTMQIQDIRLSPVALVKCFTTKIRNLCYVPHSTYYALRGHLVAKMFSENNIENNCYSISGKSNETFTVLKDFKFPTSIGVLEFKAGEKVNISGHLLSLAVAAHFVAVPVTMWARHIKYMTVDRQKPPDVDRILFFDNKIKRNTLEKWHTKSEVILAALIAGEYVGLMLNNFHSKAIVDDLCNTVLATFR</sequence>
<comment type="function">
    <text evidence="1 2 3">Enzyme involved in mRNA capping (Potential). Binds to GTP and might have guanylyltransferase activity. Together with the RNA-directed RNA polymerase P1 and protein P7, forms an transcriptional complex positioned near the channels situated at each of the five-fold vertices of the core (By similarity).</text>
</comment>
<comment type="catalytic activity">
    <reaction>
        <text>a 5'-end diphospho-ribonucleoside in mRNA + GTP + H(+) = a 5'-end (5'-triphosphoguanosine)-ribonucleoside in mRNA + diphosphate</text>
        <dbReference type="Rhea" id="RHEA:67012"/>
        <dbReference type="Rhea" id="RHEA-COMP:17165"/>
        <dbReference type="Rhea" id="RHEA-COMP:17166"/>
        <dbReference type="ChEBI" id="CHEBI:15378"/>
        <dbReference type="ChEBI" id="CHEBI:33019"/>
        <dbReference type="ChEBI" id="CHEBI:37565"/>
        <dbReference type="ChEBI" id="CHEBI:167616"/>
        <dbReference type="ChEBI" id="CHEBI:167617"/>
        <dbReference type="EC" id="2.7.7.50"/>
    </reaction>
</comment>
<comment type="pathway">
    <text>mRNA processing; mRNA capping.</text>
</comment>
<comment type="subcellular location">
    <subcellularLocation>
        <location evidence="1">Virion</location>
    </subcellularLocation>
    <subcellularLocation>
        <location evidence="1">Host cytoplasm</location>
    </subcellularLocation>
    <text evidence="1">Located inside the inner capsid. Found in the interior of spherical cytoplasmic structures, called virus factories, that appear early after infection and are the site of viral replication and packaging.</text>
</comment>
<comment type="similarity">
    <text evidence="3">Belongs to the phytoreovirus protein P5 family.</text>
</comment>